<keyword id="KW-0028">Amino-acid biosynthesis</keyword>
<keyword id="KW-0963">Cytoplasm</keyword>
<keyword id="KW-0368">Histidine biosynthesis</keyword>
<keyword id="KW-0456">Lyase</keyword>
<keyword id="KW-1185">Reference proteome</keyword>
<comment type="function">
    <text evidence="1">IGPS catalyzes the conversion of PRFAR and glutamine to IGP, AICAR and glutamate. The HisF subunit catalyzes the cyclization activity that produces IGP and AICAR from PRFAR using the ammonia provided by the HisH subunit.</text>
</comment>
<comment type="catalytic activity">
    <reaction evidence="1">
        <text>5-[(5-phospho-1-deoxy-D-ribulos-1-ylimino)methylamino]-1-(5-phospho-beta-D-ribosyl)imidazole-4-carboxamide + L-glutamine = D-erythro-1-(imidazol-4-yl)glycerol 3-phosphate + 5-amino-1-(5-phospho-beta-D-ribosyl)imidazole-4-carboxamide + L-glutamate + H(+)</text>
        <dbReference type="Rhea" id="RHEA:24793"/>
        <dbReference type="ChEBI" id="CHEBI:15378"/>
        <dbReference type="ChEBI" id="CHEBI:29985"/>
        <dbReference type="ChEBI" id="CHEBI:58278"/>
        <dbReference type="ChEBI" id="CHEBI:58359"/>
        <dbReference type="ChEBI" id="CHEBI:58475"/>
        <dbReference type="ChEBI" id="CHEBI:58525"/>
        <dbReference type="EC" id="4.3.2.10"/>
    </reaction>
</comment>
<comment type="pathway">
    <text evidence="1">Amino-acid biosynthesis; L-histidine biosynthesis; L-histidine from 5-phospho-alpha-D-ribose 1-diphosphate: step 5/9.</text>
</comment>
<comment type="subunit">
    <text evidence="1">Heterodimer of HisH and HisF.</text>
</comment>
<comment type="subcellular location">
    <subcellularLocation>
        <location evidence="1">Cytoplasm</location>
    </subcellularLocation>
</comment>
<comment type="similarity">
    <text evidence="1">Belongs to the HisA/HisF family.</text>
</comment>
<evidence type="ECO:0000255" key="1">
    <source>
        <dbReference type="HAMAP-Rule" id="MF_01013"/>
    </source>
</evidence>
<proteinExistence type="inferred from homology"/>
<name>HIS6_STACT</name>
<organism>
    <name type="scientific">Staphylococcus carnosus (strain TM300)</name>
    <dbReference type="NCBI Taxonomy" id="396513"/>
    <lineage>
        <taxon>Bacteria</taxon>
        <taxon>Bacillati</taxon>
        <taxon>Bacillota</taxon>
        <taxon>Bacilli</taxon>
        <taxon>Bacillales</taxon>
        <taxon>Staphylococcaceae</taxon>
        <taxon>Staphylococcus</taxon>
    </lineage>
</organism>
<dbReference type="EC" id="4.3.2.10" evidence="1"/>
<dbReference type="EMBL" id="AM295250">
    <property type="protein sequence ID" value="CAL27542.1"/>
    <property type="molecule type" value="Genomic_DNA"/>
</dbReference>
<dbReference type="RefSeq" id="WP_015899885.1">
    <property type="nucleotide sequence ID" value="NC_012121.1"/>
</dbReference>
<dbReference type="SMR" id="B9DIP1"/>
<dbReference type="GeneID" id="93795567"/>
<dbReference type="KEGG" id="sca:SCA_0630"/>
<dbReference type="eggNOG" id="COG0107">
    <property type="taxonomic scope" value="Bacteria"/>
</dbReference>
<dbReference type="HOGENOM" id="CLU_048577_4_0_9"/>
<dbReference type="OrthoDB" id="9781903at2"/>
<dbReference type="BioCyc" id="SCAR396513:SCA_RS03200-MONOMER"/>
<dbReference type="UniPathway" id="UPA00031">
    <property type="reaction ID" value="UER00010"/>
</dbReference>
<dbReference type="Proteomes" id="UP000000444">
    <property type="component" value="Chromosome"/>
</dbReference>
<dbReference type="GO" id="GO:0005737">
    <property type="term" value="C:cytoplasm"/>
    <property type="evidence" value="ECO:0007669"/>
    <property type="project" value="UniProtKB-SubCell"/>
</dbReference>
<dbReference type="GO" id="GO:0000107">
    <property type="term" value="F:imidazoleglycerol-phosphate synthase activity"/>
    <property type="evidence" value="ECO:0007669"/>
    <property type="project" value="UniProtKB-UniRule"/>
</dbReference>
<dbReference type="GO" id="GO:0016829">
    <property type="term" value="F:lyase activity"/>
    <property type="evidence" value="ECO:0007669"/>
    <property type="project" value="UniProtKB-KW"/>
</dbReference>
<dbReference type="GO" id="GO:0000105">
    <property type="term" value="P:L-histidine biosynthetic process"/>
    <property type="evidence" value="ECO:0007669"/>
    <property type="project" value="UniProtKB-UniRule"/>
</dbReference>
<dbReference type="CDD" id="cd04731">
    <property type="entry name" value="HisF"/>
    <property type="match status" value="1"/>
</dbReference>
<dbReference type="FunFam" id="3.20.20.70:FF:000006">
    <property type="entry name" value="Imidazole glycerol phosphate synthase subunit HisF"/>
    <property type="match status" value="1"/>
</dbReference>
<dbReference type="Gene3D" id="3.20.20.70">
    <property type="entry name" value="Aldolase class I"/>
    <property type="match status" value="1"/>
</dbReference>
<dbReference type="HAMAP" id="MF_01013">
    <property type="entry name" value="HisF"/>
    <property type="match status" value="1"/>
</dbReference>
<dbReference type="InterPro" id="IPR013785">
    <property type="entry name" value="Aldolase_TIM"/>
</dbReference>
<dbReference type="InterPro" id="IPR006062">
    <property type="entry name" value="His_biosynth"/>
</dbReference>
<dbReference type="InterPro" id="IPR004651">
    <property type="entry name" value="HisF"/>
</dbReference>
<dbReference type="InterPro" id="IPR050064">
    <property type="entry name" value="IGPS_HisA/HisF"/>
</dbReference>
<dbReference type="InterPro" id="IPR011060">
    <property type="entry name" value="RibuloseP-bd_barrel"/>
</dbReference>
<dbReference type="NCBIfam" id="TIGR00735">
    <property type="entry name" value="hisF"/>
    <property type="match status" value="1"/>
</dbReference>
<dbReference type="PANTHER" id="PTHR21235:SF2">
    <property type="entry name" value="IMIDAZOLE GLYCEROL PHOSPHATE SYNTHASE HISHF"/>
    <property type="match status" value="1"/>
</dbReference>
<dbReference type="PANTHER" id="PTHR21235">
    <property type="entry name" value="IMIDAZOLE GLYCEROL PHOSPHATE SYNTHASE SUBUNIT HISF/H IGP SYNTHASE SUBUNIT HISF/H"/>
    <property type="match status" value="1"/>
</dbReference>
<dbReference type="Pfam" id="PF00977">
    <property type="entry name" value="His_biosynth"/>
    <property type="match status" value="1"/>
</dbReference>
<dbReference type="SUPFAM" id="SSF51366">
    <property type="entry name" value="Ribulose-phoshate binding barrel"/>
    <property type="match status" value="1"/>
</dbReference>
<gene>
    <name evidence="1" type="primary">hisF</name>
    <name type="ordered locus">Sca_0630</name>
</gene>
<accession>B9DIP1</accession>
<protein>
    <recommendedName>
        <fullName evidence="1">Imidazole glycerol phosphate synthase subunit HisF</fullName>
        <ecNumber evidence="1">4.3.2.10</ecNumber>
    </recommendedName>
    <alternativeName>
        <fullName evidence="1">IGP synthase cyclase subunit</fullName>
    </alternativeName>
    <alternativeName>
        <fullName evidence="1">IGP synthase subunit HisF</fullName>
    </alternativeName>
    <alternativeName>
        <fullName evidence="1">ImGP synthase subunit HisF</fullName>
        <shortName evidence="1">IGPS subunit HisF</shortName>
    </alternativeName>
</protein>
<sequence length="254" mass="27882">MIKKRIIPCLDVKDGRVVKGVQFKGLRDIGDPVALAAYYNAELADELVFLDISRTENGHQMMLDIIEETASKLFIPLTIGGGISSTDDISTLLKHGADKVSLNSSALRNPSLVKEASEKFGSQCICIAVDAKWEDERNDWFCYTHGGKQPTDIRVLDWVRQVEYLGAGELLVTSMDYDGVKQGFDHQLLNQINTVVSIPVIASGGGGNAQHFVDLFQQTNVSAGLAASIFHDKETTIGAVKTYLKDKGVDVRWH</sequence>
<feature type="chain" id="PRO_1000148940" description="Imidazole glycerol phosphate synthase subunit HisF">
    <location>
        <begin position="1"/>
        <end position="254"/>
    </location>
</feature>
<feature type="active site" evidence="1">
    <location>
        <position position="11"/>
    </location>
</feature>
<feature type="active site" evidence="1">
    <location>
        <position position="130"/>
    </location>
</feature>
<reference key="1">
    <citation type="journal article" date="2009" name="Appl. Environ. Microbiol.">
        <title>Genome analysis of the meat starter culture bacterium Staphylococcus carnosus TM300.</title>
        <authorList>
            <person name="Rosenstein R."/>
            <person name="Nerz C."/>
            <person name="Biswas L."/>
            <person name="Resch A."/>
            <person name="Raddatz G."/>
            <person name="Schuster S.C."/>
            <person name="Goetz F."/>
        </authorList>
    </citation>
    <scope>NUCLEOTIDE SEQUENCE [LARGE SCALE GENOMIC DNA]</scope>
    <source>
        <strain>TM300</strain>
    </source>
</reference>